<dbReference type="EC" id="6.1.1.23" evidence="1"/>
<dbReference type="EMBL" id="AE017282">
    <property type="protein sequence ID" value="AAU92226.1"/>
    <property type="molecule type" value="Genomic_DNA"/>
</dbReference>
<dbReference type="RefSeq" id="WP_010961029.1">
    <property type="nucleotide sequence ID" value="NC_002977.6"/>
</dbReference>
<dbReference type="SMR" id="Q607I4"/>
<dbReference type="STRING" id="243233.MCA1776"/>
<dbReference type="GeneID" id="88224025"/>
<dbReference type="KEGG" id="mca:MCA1776"/>
<dbReference type="eggNOG" id="COG0173">
    <property type="taxonomic scope" value="Bacteria"/>
</dbReference>
<dbReference type="HOGENOM" id="CLU_014330_3_2_6"/>
<dbReference type="Proteomes" id="UP000006821">
    <property type="component" value="Chromosome"/>
</dbReference>
<dbReference type="GO" id="GO:0005737">
    <property type="term" value="C:cytoplasm"/>
    <property type="evidence" value="ECO:0007669"/>
    <property type="project" value="UniProtKB-SubCell"/>
</dbReference>
<dbReference type="GO" id="GO:0004815">
    <property type="term" value="F:aspartate-tRNA ligase activity"/>
    <property type="evidence" value="ECO:0007669"/>
    <property type="project" value="UniProtKB-UniRule"/>
</dbReference>
<dbReference type="GO" id="GO:0050560">
    <property type="term" value="F:aspartate-tRNA(Asn) ligase activity"/>
    <property type="evidence" value="ECO:0007669"/>
    <property type="project" value="UniProtKB-EC"/>
</dbReference>
<dbReference type="GO" id="GO:0005524">
    <property type="term" value="F:ATP binding"/>
    <property type="evidence" value="ECO:0007669"/>
    <property type="project" value="UniProtKB-UniRule"/>
</dbReference>
<dbReference type="GO" id="GO:0003676">
    <property type="term" value="F:nucleic acid binding"/>
    <property type="evidence" value="ECO:0007669"/>
    <property type="project" value="InterPro"/>
</dbReference>
<dbReference type="GO" id="GO:0006422">
    <property type="term" value="P:aspartyl-tRNA aminoacylation"/>
    <property type="evidence" value="ECO:0007669"/>
    <property type="project" value="UniProtKB-UniRule"/>
</dbReference>
<dbReference type="CDD" id="cd00777">
    <property type="entry name" value="AspRS_core"/>
    <property type="match status" value="1"/>
</dbReference>
<dbReference type="CDD" id="cd04317">
    <property type="entry name" value="EcAspRS_like_N"/>
    <property type="match status" value="1"/>
</dbReference>
<dbReference type="Gene3D" id="3.30.930.10">
    <property type="entry name" value="Bira Bifunctional Protein, Domain 2"/>
    <property type="match status" value="1"/>
</dbReference>
<dbReference type="Gene3D" id="3.30.1360.30">
    <property type="entry name" value="GAD-like domain"/>
    <property type="match status" value="1"/>
</dbReference>
<dbReference type="Gene3D" id="2.40.50.140">
    <property type="entry name" value="Nucleic acid-binding proteins"/>
    <property type="match status" value="1"/>
</dbReference>
<dbReference type="HAMAP" id="MF_00044">
    <property type="entry name" value="Asp_tRNA_synth_type1"/>
    <property type="match status" value="1"/>
</dbReference>
<dbReference type="InterPro" id="IPR004364">
    <property type="entry name" value="Aa-tRNA-synt_II"/>
</dbReference>
<dbReference type="InterPro" id="IPR006195">
    <property type="entry name" value="aa-tRNA-synth_II"/>
</dbReference>
<dbReference type="InterPro" id="IPR045864">
    <property type="entry name" value="aa-tRNA-synth_II/BPL/LPL"/>
</dbReference>
<dbReference type="InterPro" id="IPR004524">
    <property type="entry name" value="Asp-tRNA-ligase_1"/>
</dbReference>
<dbReference type="InterPro" id="IPR047089">
    <property type="entry name" value="Asp-tRNA-ligase_1_N"/>
</dbReference>
<dbReference type="InterPro" id="IPR002312">
    <property type="entry name" value="Asp/Asn-tRNA-synth_IIb"/>
</dbReference>
<dbReference type="InterPro" id="IPR047090">
    <property type="entry name" value="AspRS_core"/>
</dbReference>
<dbReference type="InterPro" id="IPR004115">
    <property type="entry name" value="GAD-like_sf"/>
</dbReference>
<dbReference type="InterPro" id="IPR029351">
    <property type="entry name" value="GAD_dom"/>
</dbReference>
<dbReference type="InterPro" id="IPR012340">
    <property type="entry name" value="NA-bd_OB-fold"/>
</dbReference>
<dbReference type="InterPro" id="IPR004365">
    <property type="entry name" value="NA-bd_OB_tRNA"/>
</dbReference>
<dbReference type="NCBIfam" id="TIGR00459">
    <property type="entry name" value="aspS_bact"/>
    <property type="match status" value="1"/>
</dbReference>
<dbReference type="NCBIfam" id="NF001750">
    <property type="entry name" value="PRK00476.1"/>
    <property type="match status" value="1"/>
</dbReference>
<dbReference type="PANTHER" id="PTHR22594:SF5">
    <property type="entry name" value="ASPARTATE--TRNA LIGASE, MITOCHONDRIAL"/>
    <property type="match status" value="1"/>
</dbReference>
<dbReference type="PANTHER" id="PTHR22594">
    <property type="entry name" value="ASPARTYL/LYSYL-TRNA SYNTHETASE"/>
    <property type="match status" value="1"/>
</dbReference>
<dbReference type="Pfam" id="PF02938">
    <property type="entry name" value="GAD"/>
    <property type="match status" value="1"/>
</dbReference>
<dbReference type="Pfam" id="PF00152">
    <property type="entry name" value="tRNA-synt_2"/>
    <property type="match status" value="1"/>
</dbReference>
<dbReference type="Pfam" id="PF01336">
    <property type="entry name" value="tRNA_anti-codon"/>
    <property type="match status" value="1"/>
</dbReference>
<dbReference type="PRINTS" id="PR01042">
    <property type="entry name" value="TRNASYNTHASP"/>
</dbReference>
<dbReference type="SUPFAM" id="SSF55681">
    <property type="entry name" value="Class II aaRS and biotin synthetases"/>
    <property type="match status" value="1"/>
</dbReference>
<dbReference type="SUPFAM" id="SSF55261">
    <property type="entry name" value="GAD domain-like"/>
    <property type="match status" value="1"/>
</dbReference>
<dbReference type="SUPFAM" id="SSF50249">
    <property type="entry name" value="Nucleic acid-binding proteins"/>
    <property type="match status" value="1"/>
</dbReference>
<dbReference type="PROSITE" id="PS50862">
    <property type="entry name" value="AA_TRNA_LIGASE_II"/>
    <property type="match status" value="1"/>
</dbReference>
<name>SYDND_METCA</name>
<proteinExistence type="inferred from homology"/>
<reference key="1">
    <citation type="journal article" date="2004" name="PLoS Biol.">
        <title>Genomic insights into methanotrophy: the complete genome sequence of Methylococcus capsulatus (Bath).</title>
        <authorList>
            <person name="Ward N.L."/>
            <person name="Larsen O."/>
            <person name="Sakwa J."/>
            <person name="Bruseth L."/>
            <person name="Khouri H.M."/>
            <person name="Durkin A.S."/>
            <person name="Dimitrov G."/>
            <person name="Jiang L."/>
            <person name="Scanlan D."/>
            <person name="Kang K.H."/>
            <person name="Lewis M.R."/>
            <person name="Nelson K.E."/>
            <person name="Methe B.A."/>
            <person name="Wu M."/>
            <person name="Heidelberg J.F."/>
            <person name="Paulsen I.T."/>
            <person name="Fouts D.E."/>
            <person name="Ravel J."/>
            <person name="Tettelin H."/>
            <person name="Ren Q."/>
            <person name="Read T.D."/>
            <person name="DeBoy R.T."/>
            <person name="Seshadri R."/>
            <person name="Salzberg S.L."/>
            <person name="Jensen H.B."/>
            <person name="Birkeland N.K."/>
            <person name="Nelson W.C."/>
            <person name="Dodson R.J."/>
            <person name="Grindhaug S.H."/>
            <person name="Holt I.E."/>
            <person name="Eidhammer I."/>
            <person name="Jonasen I."/>
            <person name="Vanaken S."/>
            <person name="Utterback T.R."/>
            <person name="Feldblyum T.V."/>
            <person name="Fraser C.M."/>
            <person name="Lillehaug J.R."/>
            <person name="Eisen J.A."/>
        </authorList>
    </citation>
    <scope>NUCLEOTIDE SEQUENCE [LARGE SCALE GENOMIC DNA]</scope>
    <source>
        <strain>ATCC 33009 / NCIMB 11132 / Bath</strain>
    </source>
</reference>
<gene>
    <name evidence="1" type="primary">aspS</name>
    <name type="ordered locus">MCA1776</name>
</gene>
<organism>
    <name type="scientific">Methylococcus capsulatus (strain ATCC 33009 / NCIMB 11132 / Bath)</name>
    <dbReference type="NCBI Taxonomy" id="243233"/>
    <lineage>
        <taxon>Bacteria</taxon>
        <taxon>Pseudomonadati</taxon>
        <taxon>Pseudomonadota</taxon>
        <taxon>Gammaproteobacteria</taxon>
        <taxon>Methylococcales</taxon>
        <taxon>Methylococcaceae</taxon>
        <taxon>Methylococcus</taxon>
    </lineage>
</organism>
<keyword id="KW-0030">Aminoacyl-tRNA synthetase</keyword>
<keyword id="KW-0067">ATP-binding</keyword>
<keyword id="KW-0963">Cytoplasm</keyword>
<keyword id="KW-0436">Ligase</keyword>
<keyword id="KW-0547">Nucleotide-binding</keyword>
<keyword id="KW-0648">Protein biosynthesis</keyword>
<keyword id="KW-1185">Reference proteome</keyword>
<sequence length="599" mass="67957">MRSHRCGEVNESLLGQEVGLCGWVHRRRDHGGVIFVDLRDREGLVQVVFDPDHPEPFSLAETVRSEYVIRVVGQVRARPEGTENPNLKSGRVEVLATSLEILNRSETPPFPIESDIEVNEEMRLRYRYIDLRRPVMQQRMRLRRDITRFLRNFLDHHGFYEIETPFLTKATPEGARDYLVPSRTHPHSFFALPQSPQLYKQLLMISGMDRYYQVVRCFRDEDLRADRQPEFTQLDIETSFMNEDQIMTLMEAMIRDLFRETLNEELPDPFPRMTYAEAMRRYASDKPDLRIPLELVDIADLMAGVEFKVFAGPAADPEGRVVALKLPGGGDLSRKDIDDLTRFVGIYGAKGLAYVKVNDLGAGLEGLQSPILKFMPESTIRGILERTEAQTGDLIFFGADKARIVNESMGALRVKLGQDRGLVEKGWRPLWVTDFPMFEWDEKSGRWVALHHPFTAPKCSEEQLRQNPGRALSRAYDMVLNGTEIGGGSVRIHRTEMQQTVFDLLGIGEEEAQQKFGFLLNALRYGCPPHGGLAFGLDRLVMLMSGASSIREVMAFPKTQSAWCPLIDAPAQVNDAQLHELGIRLRKNPAVEGGTVPST</sequence>
<comment type="function">
    <text evidence="1">Aspartyl-tRNA synthetase with relaxed tRNA specificity since it is able to aspartylate not only its cognate tRNA(Asp) but also tRNA(Asn). Reaction proceeds in two steps: L-aspartate is first activated by ATP to form Asp-AMP and then transferred to the acceptor end of tRNA(Asp/Asn).</text>
</comment>
<comment type="catalytic activity">
    <reaction evidence="1">
        <text>tRNA(Asx) + L-aspartate + ATP = L-aspartyl-tRNA(Asx) + AMP + diphosphate</text>
        <dbReference type="Rhea" id="RHEA:18349"/>
        <dbReference type="Rhea" id="RHEA-COMP:9710"/>
        <dbReference type="Rhea" id="RHEA-COMP:9711"/>
        <dbReference type="ChEBI" id="CHEBI:29991"/>
        <dbReference type="ChEBI" id="CHEBI:30616"/>
        <dbReference type="ChEBI" id="CHEBI:33019"/>
        <dbReference type="ChEBI" id="CHEBI:78442"/>
        <dbReference type="ChEBI" id="CHEBI:78516"/>
        <dbReference type="ChEBI" id="CHEBI:456215"/>
        <dbReference type="EC" id="6.1.1.23"/>
    </reaction>
</comment>
<comment type="subunit">
    <text evidence="1">Homodimer.</text>
</comment>
<comment type="subcellular location">
    <subcellularLocation>
        <location evidence="1">Cytoplasm</location>
    </subcellularLocation>
</comment>
<comment type="similarity">
    <text evidence="1">Belongs to the class-II aminoacyl-tRNA synthetase family. Type 1 subfamily.</text>
</comment>
<evidence type="ECO:0000255" key="1">
    <source>
        <dbReference type="HAMAP-Rule" id="MF_00044"/>
    </source>
</evidence>
<protein>
    <recommendedName>
        <fullName evidence="1">Aspartate--tRNA(Asp/Asn) ligase</fullName>
        <ecNumber evidence="1">6.1.1.23</ecNumber>
    </recommendedName>
    <alternativeName>
        <fullName evidence="1">Aspartyl-tRNA synthetase</fullName>
        <shortName evidence="1">AspRS</shortName>
    </alternativeName>
    <alternativeName>
        <fullName evidence="1">Non-discriminating aspartyl-tRNA synthetase</fullName>
        <shortName evidence="1">ND-AspRS</shortName>
    </alternativeName>
</protein>
<feature type="chain" id="PRO_0000110899" description="Aspartate--tRNA(Asp/Asn) ligase">
    <location>
        <begin position="1"/>
        <end position="599"/>
    </location>
</feature>
<feature type="region of interest" description="Aspartate" evidence="1">
    <location>
        <begin position="197"/>
        <end position="200"/>
    </location>
</feature>
<feature type="binding site" evidence="1">
    <location>
        <position position="173"/>
    </location>
    <ligand>
        <name>L-aspartate</name>
        <dbReference type="ChEBI" id="CHEBI:29991"/>
    </ligand>
</feature>
<feature type="binding site" evidence="1">
    <location>
        <begin position="219"/>
        <end position="221"/>
    </location>
    <ligand>
        <name>ATP</name>
        <dbReference type="ChEBI" id="CHEBI:30616"/>
    </ligand>
</feature>
<feature type="binding site" evidence="1">
    <location>
        <position position="219"/>
    </location>
    <ligand>
        <name>L-aspartate</name>
        <dbReference type="ChEBI" id="CHEBI:29991"/>
    </ligand>
</feature>
<feature type="binding site" evidence="1">
    <location>
        <position position="228"/>
    </location>
    <ligand>
        <name>ATP</name>
        <dbReference type="ChEBI" id="CHEBI:30616"/>
    </ligand>
</feature>
<feature type="binding site" evidence="1">
    <location>
        <position position="451"/>
    </location>
    <ligand>
        <name>L-aspartate</name>
        <dbReference type="ChEBI" id="CHEBI:29991"/>
    </ligand>
</feature>
<feature type="binding site" evidence="1">
    <location>
        <position position="484"/>
    </location>
    <ligand>
        <name>ATP</name>
        <dbReference type="ChEBI" id="CHEBI:30616"/>
    </ligand>
</feature>
<feature type="binding site" evidence="1">
    <location>
        <position position="491"/>
    </location>
    <ligand>
        <name>L-aspartate</name>
        <dbReference type="ChEBI" id="CHEBI:29991"/>
    </ligand>
</feature>
<feature type="binding site" evidence="1">
    <location>
        <begin position="536"/>
        <end position="539"/>
    </location>
    <ligand>
        <name>ATP</name>
        <dbReference type="ChEBI" id="CHEBI:30616"/>
    </ligand>
</feature>
<feature type="site" description="Important for tRNA non-discrimination" evidence="1">
    <location>
        <position position="30"/>
    </location>
</feature>
<feature type="site" description="Important for tRNA non-discrimination" evidence="1">
    <location>
        <position position="81"/>
    </location>
</feature>
<accession>Q607I4</accession>